<name>AUSS_PENBI</name>
<dbReference type="EMBL" id="MH277564">
    <property type="protein sequence ID" value="AYP72772.1"/>
    <property type="molecule type" value="mRNA"/>
</dbReference>
<dbReference type="EMBL" id="CDHK01000006">
    <property type="protein sequence ID" value="CEJ58144.1"/>
    <property type="molecule type" value="Genomic_DNA"/>
</dbReference>
<dbReference type="SMR" id="A0A0F7TN65"/>
<dbReference type="STRING" id="104259.A0A0F7TN65"/>
<dbReference type="OrthoDB" id="3758478at2759"/>
<dbReference type="UniPathway" id="UPA00213"/>
<dbReference type="Proteomes" id="UP000042958">
    <property type="component" value="Unassembled WGS sequence"/>
</dbReference>
<dbReference type="GO" id="GO:0016114">
    <property type="term" value="P:terpenoid biosynthetic process"/>
    <property type="evidence" value="ECO:0007669"/>
    <property type="project" value="UniProtKB-UniPathway"/>
</dbReference>
<dbReference type="InterPro" id="IPR050977">
    <property type="entry name" value="Fungal_Meroterpenoid_Isomerase"/>
</dbReference>
<dbReference type="InterPro" id="IPR032710">
    <property type="entry name" value="NTF2-like_dom_sf"/>
</dbReference>
<dbReference type="PANTHER" id="PTHR39598:SF1">
    <property type="entry name" value="AUSTINOID BIOSYNTHESIS CLUSTERS PROTEIN F-RELATED"/>
    <property type="match status" value="1"/>
</dbReference>
<dbReference type="PANTHER" id="PTHR39598">
    <property type="entry name" value="AUSTINOL SYNTHESIS PROTEIN F-RELATED"/>
    <property type="match status" value="1"/>
</dbReference>
<dbReference type="SUPFAM" id="SSF54427">
    <property type="entry name" value="NTF2-like"/>
    <property type="match status" value="1"/>
</dbReference>
<organism>
    <name type="scientific">Penicillium brasilianum</name>
    <dbReference type="NCBI Taxonomy" id="104259"/>
    <lineage>
        <taxon>Eukaryota</taxon>
        <taxon>Fungi</taxon>
        <taxon>Dikarya</taxon>
        <taxon>Ascomycota</taxon>
        <taxon>Pezizomycotina</taxon>
        <taxon>Eurotiomycetes</taxon>
        <taxon>Eurotiomycetidae</taxon>
        <taxon>Eurotiales</taxon>
        <taxon>Aspergillaceae</taxon>
        <taxon>Penicillium</taxon>
    </lineage>
</organism>
<reference key="1">
    <citation type="submission" date="2018-04" db="EMBL/GenBank/DDBJ databases">
        <title>Meroterpenoids from Penicillium brasilianum WZXY-m122-9.</title>
        <authorList>
            <person name="Zhang J."/>
        </authorList>
    </citation>
    <scope>NUCLEOTIDE SEQUENCE [MRNA]</scope>
    <source>
        <strain>WZXY-m122-9</strain>
    </source>
</reference>
<reference key="2">
    <citation type="journal article" date="2015" name="Genome Announc.">
        <title>Draft genome sequence of the fungus Penicillium brasilianum MG11.</title>
        <authorList>
            <person name="Horn F."/>
            <person name="Linde J."/>
            <person name="Mattern D.J."/>
            <person name="Walther G."/>
            <person name="Guthke R."/>
            <person name="Brakhage A.A."/>
            <person name="Valiante V."/>
        </authorList>
    </citation>
    <scope>NUCLEOTIDE SEQUENCE [LARGE SCALE GENOMIC DNA]</scope>
    <source>
        <strain>MG11</strain>
    </source>
</reference>
<reference key="3">
    <citation type="journal article" date="2016" name="J. Am. Chem. Soc.">
        <title>Discovery of key dioxygenases that diverged the paraherquonin and acetoxydehydroaustin pathways in Penicillium brasilianum.</title>
        <authorList>
            <person name="Matsuda Y."/>
            <person name="Iwabuchi T."/>
            <person name="Fujimoto T."/>
            <person name="Awakawa T."/>
            <person name="Nakashima Y."/>
            <person name="Mori T."/>
            <person name="Zhang H."/>
            <person name="Hayashi F."/>
            <person name="Abe I."/>
        </authorList>
    </citation>
    <scope>FUNCTION</scope>
</reference>
<reference key="4">
    <citation type="journal article" date="2017" name="ACS Chem. Biol.">
        <title>Rewiring of the austinoid biosynthetic pathway in filamentous fungi.</title>
        <authorList>
            <person name="Mattern D.J."/>
            <person name="Valiante V."/>
            <person name="Horn F."/>
            <person name="Petzke L."/>
            <person name="Brakhage A.A."/>
        </authorList>
    </citation>
    <scope>FUNCTION</scope>
</reference>
<feature type="chain" id="PRO_0000453836" description="Austinoid biosynthesis clusters protein S">
    <location>
        <begin position="1"/>
        <end position="144"/>
    </location>
</feature>
<sequence length="144" mass="16252">MSIRERLLATVSQYIAAYNEFDPSAMKTVRTPTCLSHGIAPTCKFTQSVEEHTRHMMLSRGVFRSVNASIVDDDTTVVDEVSRHVVVKVKIRCETTVGPYENEAIFIMAMDEEGALVDGIFQFLDTARFQQFQGRLDEAQESKN</sequence>
<proteinExistence type="evidence at transcript level"/>
<comment type="function">
    <text evidence="1 2 4">Part of the gene cluster B that mediates the biosynthesis of the fungal meroterpenoid acetoxydehydroaustin (PubMed:29076725). The first step of the pathway is the synthesis of 3,5-dimethylorsellinic acid by the polyketide synthase ausA (By similarity). 3,5-dimethylorsellinic acid is then prenylated by the polyprenyl transferase ausN (By similarity). Further epoxidation by the FAD-dependent monooxygenase ausM and cyclization by the probable terpene cyclase ausL lead to the formation of protoaustinoid A (By similarity). Protoaustinoid A is then oxidized to spiro-lactone preaustinoid A3 by the combined action of the FAD-binding monooxygenases ausB and ausC, and the dioxygenase ausE (By similarity). Acid-catalyzed keto-rearrangement and ring contraction of the tetraketide portion of preaustinoid A3 by ausJ lead to the formation of preaustinoid A4 (By similarity). The aldo-keto reductase ausK, with the help of ausH, is involved in the next step by transforming preaustinoid A4 into isoaustinone which is in turn hydroxylated by the P450 monooxygenase ausI to form austinolide (By similarity). The cytochrome P450 monooxygenase ausG then modifies austinolide to austinol (By similarity). Austinol is further acetylated to austin by the O-acetyltransferase ausP, which spontaneously changes to dehydroaustin (PubMed:29076725). The cytochrome P450 monooxygenase then converts dehydroaustin is into 7-dehydrodehydroaustin (PubMed:29076725). The hydroxylation catalyzed by ausR permits the second O-acetyltransferase ausQ to add an additional acetyl group to the molecule, leading to the formation of acetoxydehydroaustin (PubMed:29076725). Due to genetic rearrangements of the clusters and the subsequent loss of some enzymes, the end product of the Penicillium brasilianum austinoid biosynthesis clusters is acetoxydehydroaustin (PubMed:29076725). AusS is necessary for austinoids production and may play a possible function as a regulator (By similarity).</text>
</comment>
<comment type="pathway">
    <text evidence="7">Secondary metabolite biosynthesis; terpenoid biosynthesis.</text>
</comment>
<comment type="subunit">
    <text evidence="3">Homodimer.</text>
</comment>
<comment type="miscellaneous">
    <text evidence="7">In A.calidoustus, the austinoid gene cluster lies on a contiguous DNA region, while clusters from E.nidulans and P.brasilianum are split in their respective genomes. Genetic rearrangements provoked variability among the clusters and E.nidulans produces the least number of austionoid derivatives with the end products austinol and dehydroaustinol, while P.brasilianum can produce until acetoxydehydroaustin, and A.calidoustus produces the highest number of identified derivatives.</text>
</comment>
<comment type="similarity">
    <text evidence="6">Belongs to the trt14 isomerase family.</text>
</comment>
<accession>A0A0F7TN65</accession>
<gene>
    <name evidence="5" type="primary">ausS</name>
    <name type="ORF">PMG11_06814</name>
</gene>
<protein>
    <recommendedName>
        <fullName evidence="5">Austinoid biosynthesis clusters protein S</fullName>
    </recommendedName>
</protein>
<keyword id="KW-1185">Reference proteome</keyword>
<evidence type="ECO:0000250" key="1">
    <source>
        <dbReference type="UniProtKB" id="A0A0U5CJU2"/>
    </source>
</evidence>
<evidence type="ECO:0000250" key="2">
    <source>
        <dbReference type="UniProtKB" id="C8VQ92"/>
    </source>
</evidence>
<evidence type="ECO:0000250" key="3">
    <source>
        <dbReference type="UniProtKB" id="Q5AR31"/>
    </source>
</evidence>
<evidence type="ECO:0000269" key="4">
    <source>
    </source>
</evidence>
<evidence type="ECO:0000303" key="5">
    <source>
    </source>
</evidence>
<evidence type="ECO:0000305" key="6"/>
<evidence type="ECO:0000305" key="7">
    <source>
    </source>
</evidence>